<sequence length="443" mass="50791">MQVSVETLEGLERKVTVSVPTEKVEEEVSSRLRNLARKVKIDGFRPGKVPFNVVKSRFSDSVREEVAREMVQSTLYEALQKNELVPAGYPHVEPLEIEPGKDFKYTAVFEVMPVFEIVELNQAPVELIRSEVTDKDVDNMIEKLREQNKEWHEVTHAVKKGDKVVIDFQGFLDDKPFQGGSAEGYELVIGSGSMIPGFEDGIVGGKIDKPFDIKVSFPEDYGHKDLAGKEATFKITIKKIMEGKLPALDEAFAEKFNIKEGGIESLKKDIRENMARELERRVNMMNREKLFDSLMSVNHVELPIALIDKEIEHLKHDMYHRLFGHEHKDDEKIPDFPRELFEEQAKRRVHLGLLFAEYVKKHEIVADNDKVNAMIDKFASAYESPDELRAWYQSSKEHMAEVEALVMEDMVADKIAEDAKLKYKNMDYDSVMNPKKGTEKKGE</sequence>
<feature type="chain" id="PRO_0000179370" description="Trigger factor">
    <location>
        <begin position="1"/>
        <end position="443"/>
    </location>
</feature>
<feature type="domain" description="PPIase FKBP-type" evidence="1">
    <location>
        <begin position="161"/>
        <end position="246"/>
    </location>
</feature>
<keyword id="KW-0131">Cell cycle</keyword>
<keyword id="KW-0132">Cell division</keyword>
<keyword id="KW-0143">Chaperone</keyword>
<keyword id="KW-0963">Cytoplasm</keyword>
<keyword id="KW-0413">Isomerase</keyword>
<keyword id="KW-1185">Reference proteome</keyword>
<keyword id="KW-0697">Rotamase</keyword>
<organism>
    <name type="scientific">Legionella pneumophila subsp. pneumophila (strain Philadelphia 1 / ATCC 33152 / DSM 7513)</name>
    <dbReference type="NCBI Taxonomy" id="272624"/>
    <lineage>
        <taxon>Bacteria</taxon>
        <taxon>Pseudomonadati</taxon>
        <taxon>Pseudomonadota</taxon>
        <taxon>Gammaproteobacteria</taxon>
        <taxon>Legionellales</taxon>
        <taxon>Legionellaceae</taxon>
        <taxon>Legionella</taxon>
    </lineage>
</organism>
<accession>Q5ZUD8</accession>
<comment type="function">
    <text evidence="1">Involved in protein export. Acts as a chaperone by maintaining the newly synthesized protein in an open conformation. Functions as a peptidyl-prolyl cis-trans isomerase.</text>
</comment>
<comment type="catalytic activity">
    <reaction evidence="1">
        <text>[protein]-peptidylproline (omega=180) = [protein]-peptidylproline (omega=0)</text>
        <dbReference type="Rhea" id="RHEA:16237"/>
        <dbReference type="Rhea" id="RHEA-COMP:10747"/>
        <dbReference type="Rhea" id="RHEA-COMP:10748"/>
        <dbReference type="ChEBI" id="CHEBI:83833"/>
        <dbReference type="ChEBI" id="CHEBI:83834"/>
        <dbReference type="EC" id="5.2.1.8"/>
    </reaction>
</comment>
<comment type="subcellular location">
    <subcellularLocation>
        <location>Cytoplasm</location>
    </subcellularLocation>
    <text evidence="1">About half TF is bound to the ribosome near the polypeptide exit tunnel while the other half is free in the cytoplasm.</text>
</comment>
<comment type="domain">
    <text evidence="1">Consists of 3 domains; the N-terminus binds the ribosome, the middle domain has PPIase activity, while the C-terminus has intrinsic chaperone activity on its own.</text>
</comment>
<comment type="similarity">
    <text evidence="1">Belongs to the FKBP-type PPIase family. Tig subfamily.</text>
</comment>
<dbReference type="EC" id="5.2.1.8" evidence="1"/>
<dbReference type="EMBL" id="AE017354">
    <property type="protein sequence ID" value="AAU27939.1"/>
    <property type="molecule type" value="Genomic_DNA"/>
</dbReference>
<dbReference type="RefSeq" id="WP_010947586.1">
    <property type="nucleotide sequence ID" value="NC_002942.5"/>
</dbReference>
<dbReference type="RefSeq" id="YP_095886.1">
    <property type="nucleotide sequence ID" value="NC_002942.5"/>
</dbReference>
<dbReference type="SMR" id="Q5ZUD8"/>
<dbReference type="STRING" id="272624.lpg1862"/>
<dbReference type="PaxDb" id="272624-lpg1862"/>
<dbReference type="GeneID" id="57035854"/>
<dbReference type="KEGG" id="lpn:lpg1862"/>
<dbReference type="PATRIC" id="fig|272624.6.peg.1951"/>
<dbReference type="eggNOG" id="COG0544">
    <property type="taxonomic scope" value="Bacteria"/>
</dbReference>
<dbReference type="HOGENOM" id="CLU_033058_2_0_6"/>
<dbReference type="OrthoDB" id="9767721at2"/>
<dbReference type="Proteomes" id="UP000000609">
    <property type="component" value="Chromosome"/>
</dbReference>
<dbReference type="GO" id="GO:0005737">
    <property type="term" value="C:cytoplasm"/>
    <property type="evidence" value="ECO:0007669"/>
    <property type="project" value="UniProtKB-SubCell"/>
</dbReference>
<dbReference type="GO" id="GO:0003755">
    <property type="term" value="F:peptidyl-prolyl cis-trans isomerase activity"/>
    <property type="evidence" value="ECO:0007669"/>
    <property type="project" value="UniProtKB-UniRule"/>
</dbReference>
<dbReference type="GO" id="GO:0044183">
    <property type="term" value="F:protein folding chaperone"/>
    <property type="evidence" value="ECO:0007669"/>
    <property type="project" value="TreeGrafter"/>
</dbReference>
<dbReference type="GO" id="GO:0043022">
    <property type="term" value="F:ribosome binding"/>
    <property type="evidence" value="ECO:0007669"/>
    <property type="project" value="TreeGrafter"/>
</dbReference>
<dbReference type="GO" id="GO:0051083">
    <property type="term" value="P:'de novo' cotranslational protein folding"/>
    <property type="evidence" value="ECO:0007669"/>
    <property type="project" value="TreeGrafter"/>
</dbReference>
<dbReference type="GO" id="GO:0051301">
    <property type="term" value="P:cell division"/>
    <property type="evidence" value="ECO:0007669"/>
    <property type="project" value="UniProtKB-KW"/>
</dbReference>
<dbReference type="GO" id="GO:0061077">
    <property type="term" value="P:chaperone-mediated protein folding"/>
    <property type="evidence" value="ECO:0007669"/>
    <property type="project" value="TreeGrafter"/>
</dbReference>
<dbReference type="GO" id="GO:0015031">
    <property type="term" value="P:protein transport"/>
    <property type="evidence" value="ECO:0007669"/>
    <property type="project" value="UniProtKB-UniRule"/>
</dbReference>
<dbReference type="GO" id="GO:0043335">
    <property type="term" value="P:protein unfolding"/>
    <property type="evidence" value="ECO:0007669"/>
    <property type="project" value="TreeGrafter"/>
</dbReference>
<dbReference type="FunFam" id="3.10.50.40:FF:000001">
    <property type="entry name" value="Trigger factor"/>
    <property type="match status" value="1"/>
</dbReference>
<dbReference type="Gene3D" id="3.10.50.40">
    <property type="match status" value="1"/>
</dbReference>
<dbReference type="Gene3D" id="3.30.70.1050">
    <property type="entry name" value="Trigger factor ribosome-binding domain"/>
    <property type="match status" value="1"/>
</dbReference>
<dbReference type="Gene3D" id="1.10.3120.10">
    <property type="entry name" value="Trigger factor, C-terminal domain"/>
    <property type="match status" value="1"/>
</dbReference>
<dbReference type="HAMAP" id="MF_00303">
    <property type="entry name" value="Trigger_factor_Tig"/>
    <property type="match status" value="1"/>
</dbReference>
<dbReference type="InterPro" id="IPR046357">
    <property type="entry name" value="PPIase_dom_sf"/>
</dbReference>
<dbReference type="InterPro" id="IPR001179">
    <property type="entry name" value="PPIase_FKBP_dom"/>
</dbReference>
<dbReference type="InterPro" id="IPR005215">
    <property type="entry name" value="Trig_fac"/>
</dbReference>
<dbReference type="InterPro" id="IPR008880">
    <property type="entry name" value="Trigger_fac_C"/>
</dbReference>
<dbReference type="InterPro" id="IPR037041">
    <property type="entry name" value="Trigger_fac_C_sf"/>
</dbReference>
<dbReference type="InterPro" id="IPR008881">
    <property type="entry name" value="Trigger_fac_ribosome-bd_bac"/>
</dbReference>
<dbReference type="InterPro" id="IPR036611">
    <property type="entry name" value="Trigger_fac_ribosome-bd_sf"/>
</dbReference>
<dbReference type="InterPro" id="IPR027304">
    <property type="entry name" value="Trigger_fact/SurA_dom_sf"/>
</dbReference>
<dbReference type="NCBIfam" id="TIGR00115">
    <property type="entry name" value="tig"/>
    <property type="match status" value="1"/>
</dbReference>
<dbReference type="PANTHER" id="PTHR30560">
    <property type="entry name" value="TRIGGER FACTOR CHAPERONE AND PEPTIDYL-PROLYL CIS/TRANS ISOMERASE"/>
    <property type="match status" value="1"/>
</dbReference>
<dbReference type="PANTHER" id="PTHR30560:SF3">
    <property type="entry name" value="TRIGGER FACTOR-LIKE PROTEIN TIG, CHLOROPLASTIC"/>
    <property type="match status" value="1"/>
</dbReference>
<dbReference type="Pfam" id="PF00254">
    <property type="entry name" value="FKBP_C"/>
    <property type="match status" value="1"/>
</dbReference>
<dbReference type="Pfam" id="PF05698">
    <property type="entry name" value="Trigger_C"/>
    <property type="match status" value="1"/>
</dbReference>
<dbReference type="Pfam" id="PF05697">
    <property type="entry name" value="Trigger_N"/>
    <property type="match status" value="1"/>
</dbReference>
<dbReference type="PIRSF" id="PIRSF003095">
    <property type="entry name" value="Trigger_factor"/>
    <property type="match status" value="1"/>
</dbReference>
<dbReference type="SUPFAM" id="SSF54534">
    <property type="entry name" value="FKBP-like"/>
    <property type="match status" value="1"/>
</dbReference>
<dbReference type="SUPFAM" id="SSF109998">
    <property type="entry name" value="Triger factor/SurA peptide-binding domain-like"/>
    <property type="match status" value="1"/>
</dbReference>
<dbReference type="SUPFAM" id="SSF102735">
    <property type="entry name" value="Trigger factor ribosome-binding domain"/>
    <property type="match status" value="1"/>
</dbReference>
<dbReference type="PROSITE" id="PS50059">
    <property type="entry name" value="FKBP_PPIASE"/>
    <property type="match status" value="1"/>
</dbReference>
<reference key="1">
    <citation type="journal article" date="2004" name="Science">
        <title>The genomic sequence of the accidental pathogen Legionella pneumophila.</title>
        <authorList>
            <person name="Chien M."/>
            <person name="Morozova I."/>
            <person name="Shi S."/>
            <person name="Sheng H."/>
            <person name="Chen J."/>
            <person name="Gomez S.M."/>
            <person name="Asamani G."/>
            <person name="Hill K."/>
            <person name="Nuara J."/>
            <person name="Feder M."/>
            <person name="Rineer J."/>
            <person name="Greenberg J.J."/>
            <person name="Steshenko V."/>
            <person name="Park S.H."/>
            <person name="Zhao B."/>
            <person name="Teplitskaya E."/>
            <person name="Edwards J.R."/>
            <person name="Pampou S."/>
            <person name="Georghiou A."/>
            <person name="Chou I.-C."/>
            <person name="Iannuccilli W."/>
            <person name="Ulz M.E."/>
            <person name="Kim D.H."/>
            <person name="Geringer-Sameth A."/>
            <person name="Goldsberry C."/>
            <person name="Morozov P."/>
            <person name="Fischer S.G."/>
            <person name="Segal G."/>
            <person name="Qu X."/>
            <person name="Rzhetsky A."/>
            <person name="Zhang P."/>
            <person name="Cayanis E."/>
            <person name="De Jong P.J."/>
            <person name="Ju J."/>
            <person name="Kalachikov S."/>
            <person name="Shuman H.A."/>
            <person name="Russo J.J."/>
        </authorList>
    </citation>
    <scope>NUCLEOTIDE SEQUENCE [LARGE SCALE GENOMIC DNA]</scope>
    <source>
        <strain>Philadelphia 1 / ATCC 33152 / DSM 7513</strain>
    </source>
</reference>
<evidence type="ECO:0000255" key="1">
    <source>
        <dbReference type="HAMAP-Rule" id="MF_00303"/>
    </source>
</evidence>
<protein>
    <recommendedName>
        <fullName evidence="1">Trigger factor</fullName>
        <shortName evidence="1">TF</shortName>
        <ecNumber evidence="1">5.2.1.8</ecNumber>
    </recommendedName>
    <alternativeName>
        <fullName evidence="1">PPIase</fullName>
    </alternativeName>
</protein>
<name>TIG_LEGPH</name>
<gene>
    <name evidence="1" type="primary">tig</name>
    <name type="ordered locus">lpg1862</name>
</gene>
<proteinExistence type="inferred from homology"/>